<feature type="chain" id="PRO_0000379468" description="Putative 2'-deoxynucleoside 5'-phosphate N-hydrolase 1">
    <location>
        <begin position="1"/>
        <end position="122"/>
    </location>
</feature>
<feature type="binding site" description="in other chain" evidence="2">
    <location>
        <begin position="4"/>
        <end position="10"/>
    </location>
    <ligand>
        <name>substrate</name>
        <note>ligand shared between homodimeric partners</note>
    </ligand>
</feature>
<feature type="binding site" description="in other chain" evidence="2">
    <location>
        <position position="19"/>
    </location>
    <ligand>
        <name>substrate</name>
        <note>ligand shared between homodimeric partners</note>
    </ligand>
</feature>
<feature type="binding site" description="in other chain" evidence="1">
    <location>
        <position position="37"/>
    </location>
    <ligand>
        <name>substrate</name>
        <note>ligand shared between homodimeric partners</note>
    </ligand>
</feature>
<feature type="binding site" description="in other chain" evidence="2">
    <location>
        <position position="83"/>
    </location>
    <ligand>
        <name>substrate</name>
        <note>ligand shared between homodimeric partners</note>
    </ligand>
</feature>
<feature type="binding site" evidence="2">
    <location>
        <begin position="105"/>
        <end position="107"/>
    </location>
    <ligand>
        <name>substrate</name>
        <note>ligand shared between homodimeric partners</note>
    </ligand>
</feature>
<dbReference type="EC" id="3.2.2.-" evidence="2"/>
<dbReference type="EMBL" id="CP000300">
    <property type="protein sequence ID" value="ABE52745.1"/>
    <property type="molecule type" value="Genomic_DNA"/>
</dbReference>
<dbReference type="RefSeq" id="WP_011499888.1">
    <property type="nucleotide sequence ID" value="NC_007955.1"/>
</dbReference>
<dbReference type="SMR" id="Q12UY1"/>
<dbReference type="STRING" id="259564.Mbur_1862"/>
<dbReference type="GeneID" id="3997523"/>
<dbReference type="KEGG" id="mbu:Mbur_1862"/>
<dbReference type="HOGENOM" id="CLU_100069_1_0_2"/>
<dbReference type="OrthoDB" id="30967at2157"/>
<dbReference type="Proteomes" id="UP000001979">
    <property type="component" value="Chromosome"/>
</dbReference>
<dbReference type="GO" id="GO:0070694">
    <property type="term" value="F:5-hydroxymethyl-dUMP N-hydrolase activity"/>
    <property type="evidence" value="ECO:0000250"/>
    <property type="project" value="UniProtKB"/>
</dbReference>
<dbReference type="GO" id="GO:0009159">
    <property type="term" value="P:deoxyribonucleoside monophosphate catabolic process"/>
    <property type="evidence" value="ECO:0000250"/>
    <property type="project" value="UniProtKB"/>
</dbReference>
<dbReference type="GO" id="GO:0009116">
    <property type="term" value="P:nucleoside metabolic process"/>
    <property type="evidence" value="ECO:0007669"/>
    <property type="project" value="UniProtKB-UniRule"/>
</dbReference>
<dbReference type="GO" id="GO:0009117">
    <property type="term" value="P:nucleotide metabolic process"/>
    <property type="evidence" value="ECO:0007669"/>
    <property type="project" value="UniProtKB-KW"/>
</dbReference>
<dbReference type="FunFam" id="3.40.50.450:FF:000019">
    <property type="entry name" value="2'-deoxynucleoside 5'-phosphate N-hydrolase 1"/>
    <property type="match status" value="1"/>
</dbReference>
<dbReference type="Gene3D" id="3.40.50.450">
    <property type="match status" value="1"/>
</dbReference>
<dbReference type="HAMAP" id="MF_03036">
    <property type="entry name" value="Nuc_phosphate_hydrolase"/>
    <property type="match status" value="1"/>
</dbReference>
<dbReference type="InterPro" id="IPR051239">
    <property type="entry name" value="2'-dNMP_N-hydrolase"/>
</dbReference>
<dbReference type="InterPro" id="IPR028607">
    <property type="entry name" value="DNPH1"/>
</dbReference>
<dbReference type="InterPro" id="IPR007710">
    <property type="entry name" value="Nucleoside_deoxyribTrfase"/>
</dbReference>
<dbReference type="PANTHER" id="PTHR15364">
    <property type="entry name" value="2'-DEOXYNUCLEOSIDE 5'-PHOSPHATE N-HYDROLASE 1"/>
    <property type="match status" value="1"/>
</dbReference>
<dbReference type="PANTHER" id="PTHR15364:SF0">
    <property type="entry name" value="2'-DEOXYNUCLEOSIDE 5'-PHOSPHATE N-HYDROLASE 1"/>
    <property type="match status" value="1"/>
</dbReference>
<dbReference type="Pfam" id="PF05014">
    <property type="entry name" value="Nuc_deoxyrib_tr"/>
    <property type="match status" value="1"/>
</dbReference>
<dbReference type="SUPFAM" id="SSF52309">
    <property type="entry name" value="N-(deoxy)ribosyltransferase-like"/>
    <property type="match status" value="1"/>
</dbReference>
<sequence length="122" mass="13654">MKVFLSGSIRGGRQMLPTYQFICRFLRNKGHEVLSWHVADSEVEGKESLLTETQIYERDMSFLQDSECMIAEVSMPSIGVGYEVCSAIKKGIPVMCVHMPDSNVSAMLLGNTYADISVRLWG</sequence>
<keyword id="KW-0326">Glycosidase</keyword>
<keyword id="KW-0378">Hydrolase</keyword>
<keyword id="KW-0546">Nucleotide metabolism</keyword>
<proteinExistence type="inferred from homology"/>
<reference key="1">
    <citation type="journal article" date="2009" name="ISME J.">
        <title>The genome sequence of the psychrophilic archaeon, Methanococcoides burtonii: the role of genome evolution in cold adaptation.</title>
        <authorList>
            <person name="Allen M.A."/>
            <person name="Lauro F.M."/>
            <person name="Williams T.J."/>
            <person name="Burg D."/>
            <person name="Siddiqui K.S."/>
            <person name="De Francisci D."/>
            <person name="Chong K.W."/>
            <person name="Pilak O."/>
            <person name="Chew H.H."/>
            <person name="De Maere M.Z."/>
            <person name="Ting L."/>
            <person name="Katrib M."/>
            <person name="Ng C."/>
            <person name="Sowers K.R."/>
            <person name="Galperin M.Y."/>
            <person name="Anderson I.J."/>
            <person name="Ivanova N."/>
            <person name="Dalin E."/>
            <person name="Martinez M."/>
            <person name="Lapidus A."/>
            <person name="Hauser L."/>
            <person name="Land M."/>
            <person name="Thomas T."/>
            <person name="Cavicchioli R."/>
        </authorList>
    </citation>
    <scope>NUCLEOTIDE SEQUENCE [LARGE SCALE GENOMIC DNA]</scope>
    <source>
        <strain>DSM 6242 / NBRC 107633 / OCM 468 / ACE-M</strain>
    </source>
</reference>
<protein>
    <recommendedName>
        <fullName evidence="2">Putative 2'-deoxynucleoside 5'-phosphate N-hydrolase 1</fullName>
        <ecNumber evidence="2">3.2.2.-</ecNumber>
    </recommendedName>
</protein>
<comment type="function">
    <text evidence="2">Catalyzes the cleavage of the N-glycosidic bond of deoxyribonucleoside 5'-monophosphates to yield deoxyribose 5-phosphate and a purine or pyrimidine base.</text>
</comment>
<comment type="catalytic activity">
    <reaction evidence="2">
        <text>a pyrimidine 2'-deoxyribonucleoside 5'-phosphate + H2O = a pyrimidine nucleobase + 2-deoxy-D-ribose 5-phosphate</text>
        <dbReference type="Rhea" id="RHEA:57852"/>
        <dbReference type="ChEBI" id="CHEBI:15377"/>
        <dbReference type="ChEBI" id="CHEBI:26432"/>
        <dbReference type="ChEBI" id="CHEBI:62877"/>
        <dbReference type="ChEBI" id="CHEBI:142209"/>
    </reaction>
</comment>
<comment type="catalytic activity">
    <reaction evidence="2">
        <text>a purine 2'-deoxyribonucleoside 5'-phosphate + H2O = a purine nucleobase + 2-deoxy-D-ribose 5-phosphate</text>
        <dbReference type="Rhea" id="RHEA:51132"/>
        <dbReference type="ChEBI" id="CHEBI:15377"/>
        <dbReference type="ChEBI" id="CHEBI:26386"/>
        <dbReference type="ChEBI" id="CHEBI:62877"/>
        <dbReference type="ChEBI" id="CHEBI:142198"/>
    </reaction>
</comment>
<comment type="subunit">
    <text evidence="2">Monomer and homodimer.</text>
</comment>
<comment type="similarity">
    <text evidence="2">Belongs to the 2'-deoxynucleoside 5'-phosphate N-hydrolase 1 family.</text>
</comment>
<name>DNPH1_METBU</name>
<gene>
    <name type="ordered locus">Mbur_1862</name>
</gene>
<accession>Q12UY1</accession>
<organism>
    <name type="scientific">Methanococcoides burtonii (strain DSM 6242 / NBRC 107633 / OCM 468 / ACE-M)</name>
    <dbReference type="NCBI Taxonomy" id="259564"/>
    <lineage>
        <taxon>Archaea</taxon>
        <taxon>Methanobacteriati</taxon>
        <taxon>Methanobacteriota</taxon>
        <taxon>Stenosarchaea group</taxon>
        <taxon>Methanomicrobia</taxon>
        <taxon>Methanosarcinales</taxon>
        <taxon>Methanosarcinaceae</taxon>
        <taxon>Methanococcoides</taxon>
    </lineage>
</organism>
<evidence type="ECO:0000250" key="1">
    <source>
        <dbReference type="UniProtKB" id="O35820"/>
    </source>
</evidence>
<evidence type="ECO:0000255" key="2">
    <source>
        <dbReference type="HAMAP-Rule" id="MF_03036"/>
    </source>
</evidence>